<protein>
    <recommendedName>
        <fullName>Beta-hexosaminidase</fullName>
        <ecNumber>3.2.1.52</ecNumber>
    </recommendedName>
    <alternativeName>
        <fullName>Beta-N-acetylhexosaminidase</fullName>
    </alternativeName>
    <alternativeName>
        <fullName>Chitobiase</fullName>
    </alternativeName>
    <alternativeName>
        <fullName>N-acetyl-beta-glucosaminidase</fullName>
    </alternativeName>
</protein>
<evidence type="ECO:0000250" key="1"/>
<evidence type="ECO:0000305" key="2"/>
<keyword id="KW-0119">Carbohydrate metabolism</keyword>
<keyword id="KW-0146">Chitin degradation</keyword>
<keyword id="KW-1015">Disulfide bond</keyword>
<keyword id="KW-0326">Glycosidase</keyword>
<keyword id="KW-0378">Hydrolase</keyword>
<keyword id="KW-0624">Polysaccharide degradation</keyword>
<organism>
    <name type="scientific">Vibrio vulnificus</name>
    <dbReference type="NCBI Taxonomy" id="672"/>
    <lineage>
        <taxon>Bacteria</taxon>
        <taxon>Pseudomonadati</taxon>
        <taxon>Pseudomonadota</taxon>
        <taxon>Gammaproteobacteria</taxon>
        <taxon>Vibrionales</taxon>
        <taxon>Vibrionaceae</taxon>
        <taxon>Vibrio</taxon>
    </lineage>
</organism>
<reference key="1">
    <citation type="journal article" date="1993" name="Proc. Natl. Acad. Sci. U.S.A.">
        <title>Sequence analysis of the beta-N-acetylhexosaminidase gene of Vibrio vulnificus: evidence for a common evolutionary origin of hexosaminidases.</title>
        <authorList>
            <person name="Somerville C.C."/>
            <person name="Colwell R.R."/>
        </authorList>
    </citation>
    <scope>NUCLEOTIDE SEQUENCE [GENOMIC DNA]</scope>
    <source>
        <strain>ATCC 27562 / DSM 10143 / JCM 3725 / BCRC 12905 / CCUG 13448 / KCTC 2959 / LMG 13545 / NBRC 15645 / NCIMB 2046 / WDCM 00139 / 324</strain>
    </source>
</reference>
<name>HEX_VIBVL</name>
<proteinExistence type="inferred from homology"/>
<dbReference type="EC" id="3.2.1.52"/>
<dbReference type="EMBL" id="L04544">
    <property type="protein sequence ID" value="AAA27527.1"/>
    <property type="molecule type" value="Genomic_DNA"/>
</dbReference>
<dbReference type="PIR" id="A48228">
    <property type="entry name" value="A48228"/>
</dbReference>
<dbReference type="SMR" id="Q04786"/>
<dbReference type="CAZy" id="GH20">
    <property type="family name" value="Glycoside Hydrolase Family 20"/>
</dbReference>
<dbReference type="UniPathway" id="UPA00349"/>
<dbReference type="GO" id="GO:0016020">
    <property type="term" value="C:membrane"/>
    <property type="evidence" value="ECO:0007669"/>
    <property type="project" value="TreeGrafter"/>
</dbReference>
<dbReference type="GO" id="GO:0004563">
    <property type="term" value="F:beta-N-acetylhexosaminidase activity"/>
    <property type="evidence" value="ECO:0007669"/>
    <property type="project" value="UniProtKB-EC"/>
</dbReference>
<dbReference type="GO" id="GO:0030247">
    <property type="term" value="F:polysaccharide binding"/>
    <property type="evidence" value="ECO:0007669"/>
    <property type="project" value="InterPro"/>
</dbReference>
<dbReference type="GO" id="GO:0006032">
    <property type="term" value="P:chitin catabolic process"/>
    <property type="evidence" value="ECO:0007669"/>
    <property type="project" value="UniProtKB-UniPathway"/>
</dbReference>
<dbReference type="GO" id="GO:0030203">
    <property type="term" value="P:glycosaminoglycan metabolic process"/>
    <property type="evidence" value="ECO:0007669"/>
    <property type="project" value="TreeGrafter"/>
</dbReference>
<dbReference type="GO" id="GO:0000272">
    <property type="term" value="P:polysaccharide catabolic process"/>
    <property type="evidence" value="ECO:0007669"/>
    <property type="project" value="UniProtKB-KW"/>
</dbReference>
<dbReference type="CDD" id="cd02847">
    <property type="entry name" value="E_set_Chitobiase_C"/>
    <property type="match status" value="1"/>
</dbReference>
<dbReference type="CDD" id="cd06569">
    <property type="entry name" value="GH20_Sm-chitobiase-like"/>
    <property type="match status" value="1"/>
</dbReference>
<dbReference type="Gene3D" id="2.60.40.290">
    <property type="match status" value="1"/>
</dbReference>
<dbReference type="Gene3D" id="3.30.379.10">
    <property type="entry name" value="Chitobiase/beta-hexosaminidase domain 2-like"/>
    <property type="match status" value="1"/>
</dbReference>
<dbReference type="Gene3D" id="3.20.20.80">
    <property type="entry name" value="Glycosidases"/>
    <property type="match status" value="1"/>
</dbReference>
<dbReference type="Gene3D" id="2.60.40.10">
    <property type="entry name" value="Immunoglobulins"/>
    <property type="match status" value="1"/>
</dbReference>
<dbReference type="InterPro" id="IPR025705">
    <property type="entry name" value="Beta_hexosaminidase_sua/sub"/>
</dbReference>
<dbReference type="InterPro" id="IPR008965">
    <property type="entry name" value="CBM2/CBM3_carb-bd_dom_sf"/>
</dbReference>
<dbReference type="InterPro" id="IPR012291">
    <property type="entry name" value="CBM2_carb-bd_dom_sf"/>
</dbReference>
<dbReference type="InterPro" id="IPR004866">
    <property type="entry name" value="CHB/HEX_N_dom"/>
</dbReference>
<dbReference type="InterPro" id="IPR004867">
    <property type="entry name" value="CHB_C_dom"/>
</dbReference>
<dbReference type="InterPro" id="IPR015883">
    <property type="entry name" value="Glyco_hydro_20_cat"/>
</dbReference>
<dbReference type="InterPro" id="IPR017853">
    <property type="entry name" value="Glycoside_hydrolase_SF"/>
</dbReference>
<dbReference type="InterPro" id="IPR029018">
    <property type="entry name" value="Hex-like_dom2"/>
</dbReference>
<dbReference type="InterPro" id="IPR015882">
    <property type="entry name" value="HEX_bac_N"/>
</dbReference>
<dbReference type="InterPro" id="IPR013783">
    <property type="entry name" value="Ig-like_fold"/>
</dbReference>
<dbReference type="InterPro" id="IPR014756">
    <property type="entry name" value="Ig_E-set"/>
</dbReference>
<dbReference type="PANTHER" id="PTHR22600">
    <property type="entry name" value="BETA-HEXOSAMINIDASE"/>
    <property type="match status" value="1"/>
</dbReference>
<dbReference type="PANTHER" id="PTHR22600:SF57">
    <property type="entry name" value="BETA-N-ACETYLHEXOSAMINIDASE"/>
    <property type="match status" value="1"/>
</dbReference>
<dbReference type="Pfam" id="PF03173">
    <property type="entry name" value="CHB_HEX"/>
    <property type="match status" value="1"/>
</dbReference>
<dbReference type="Pfam" id="PF03174">
    <property type="entry name" value="CHB_HEX_C"/>
    <property type="match status" value="1"/>
</dbReference>
<dbReference type="Pfam" id="PF00728">
    <property type="entry name" value="Glyco_hydro_20"/>
    <property type="match status" value="1"/>
</dbReference>
<dbReference type="Pfam" id="PF02838">
    <property type="entry name" value="Glyco_hydro_20b"/>
    <property type="match status" value="1"/>
</dbReference>
<dbReference type="PRINTS" id="PR00738">
    <property type="entry name" value="GLHYDRLASE20"/>
</dbReference>
<dbReference type="SMART" id="SM01081">
    <property type="entry name" value="CHB_HEX"/>
    <property type="match status" value="1"/>
</dbReference>
<dbReference type="SUPFAM" id="SSF51445">
    <property type="entry name" value="(Trans)glycosidases"/>
    <property type="match status" value="1"/>
</dbReference>
<dbReference type="SUPFAM" id="SSF55545">
    <property type="entry name" value="beta-N-acetylhexosaminidase-like domain"/>
    <property type="match status" value="1"/>
</dbReference>
<dbReference type="SUPFAM" id="SSF49384">
    <property type="entry name" value="Carbohydrate-binding domain"/>
    <property type="match status" value="1"/>
</dbReference>
<dbReference type="SUPFAM" id="SSF81296">
    <property type="entry name" value="E set domains"/>
    <property type="match status" value="1"/>
</dbReference>
<sequence length="847" mass="94277">MASDIDQKDVDYAAKNLKLTTSLVANKPKDCPPEAPWGACYRVEINLENTGSKSLNENVEIYFSSIHRTLGSKSEEFKVEHINGDLHKITTTEKFKGLKGGKTKSFQVDFMNWIVSNSDFMPNYYVASEHLEGRNILNTVPIDAVHITEEVSGFTTGIKHTPNQLKRTANDLLPAATATTRYEQYSKVKDLGADAVSAHILPTPLETSVHEGSLNIAQGINIVSDALPADQVEALNFRFETLGVNTGTGVPVNVTIKADSSKKSGSYTLDVTSSGIRIVGVDKAGAFYGVQSLAGLVTVGKDTINQVSINDEPRLDYRGMHMDVSRNFHSKELVFRFLDQMAAYKMNKFHFHLADDEGWRLEINGLPELTQVGAHRCHDVEQNKCMMPQLGSGAELPNNGSGYYTREDYKEILAYASARNIQVIPSMDMPGHSLAAVKSMEARYRKFMAEGDVVKAEMYLLSDPNDTTQYYSIQHYQDNTINPCMESSFVFMDKVIDEINKLHKEGGQPLTDYHIGADETAGAWGDSPECRKMFVAPESGVKNAKDINGYFINRISHILDAKGLTLGAWNDGLSHKALDASSLAGNPPKAWVWGTMFWGGVDQYNSFANKGYDVVVTPPDAYYFDMPYENDPEERGYYWATRFNDTKKVFSFMPENVPANVEWMTDRMGAKISATTGEKTHDFLGVQGALWSETIRTDAQVEYMVLPRMIAVAERGWHKASWEEEHKEGITYTSNVDGHEGTTHLNDNIATRDADWAHFSNILGYKEMPKLDKAGITYRLPVLGAVIKNNILDVVTEFHGVAIQYSLDGKTWHKYDDTKKPQVSTKALVRSVSTNGRTGRAVEVLAK</sequence>
<accession>Q04786</accession>
<gene>
    <name type="primary">hex</name>
</gene>
<feature type="chain" id="PRO_0000215378" description="Beta-hexosaminidase">
    <location>
        <begin position="1"/>
        <end position="847"/>
    </location>
</feature>
<feature type="active site" description="Proton donor" evidence="1">
    <location>
        <position position="519"/>
    </location>
</feature>
<feature type="disulfide bond" evidence="1">
    <location>
        <begin position="31"/>
        <end position="40"/>
    </location>
</feature>
<feature type="disulfide bond" evidence="1">
    <location>
        <begin position="377"/>
        <end position="385"/>
    </location>
</feature>
<feature type="disulfide bond" evidence="1">
    <location>
        <begin position="484"/>
        <end position="530"/>
    </location>
</feature>
<comment type="function">
    <text>Hydrolysis of terminal, non-reducing N-acetyl-beta-D-glucosamine residues in chitobiose and higher analogs, and in glycoproteins.</text>
</comment>
<comment type="catalytic activity">
    <reaction>
        <text>Hydrolysis of terminal non-reducing N-acetyl-D-hexosamine residues in N-acetyl-beta-D-hexosaminides.</text>
        <dbReference type="EC" id="3.2.1.52"/>
    </reaction>
</comment>
<comment type="pathway">
    <text>Glycan degradation; chitin degradation.</text>
</comment>
<comment type="similarity">
    <text evidence="2">Belongs to the glycosyl hydrolase 20 family.</text>
</comment>